<comment type="function">
    <text evidence="2">Binds single-stranded RNA. Involved in the process of mRNA degradation and in the positive regulation of mRNA decapping (By similarity).</text>
</comment>
<comment type="subunit">
    <text evidence="2">Homodimer (via YjeF N-terminal domain). Forms a complex with DCP1A, DCP2, DDX6 and EDC4/HEDLS, within this complex directly interacts with DCP1A and DDX6. Interacts with ZFP36.</text>
</comment>
<comment type="subcellular location">
    <subcellularLocation>
        <location evidence="1">Cytoplasm</location>
        <location evidence="1">P-body</location>
    </subcellularLocation>
    <text evidence="1">Processing bodies (PB).</text>
</comment>
<comment type="domain">
    <text evidence="1">The DFDF domain is unstructured by itself. It assumes a helical fold upon interaction with DDX6 (By similarity).</text>
</comment>
<comment type="similarity">
    <text evidence="7">Belongs to the EDC3 family.</text>
</comment>
<evidence type="ECO:0000250" key="1"/>
<evidence type="ECO:0000250" key="2">
    <source>
        <dbReference type="UniProtKB" id="Q96F86"/>
    </source>
</evidence>
<evidence type="ECO:0000255" key="3">
    <source>
        <dbReference type="PROSITE-ProRule" id="PRU00719"/>
    </source>
</evidence>
<evidence type="ECO:0000255" key="4">
    <source>
        <dbReference type="PROSITE-ProRule" id="PRU00845"/>
    </source>
</evidence>
<evidence type="ECO:0000255" key="5">
    <source>
        <dbReference type="PROSITE-ProRule" id="PRU01346"/>
    </source>
</evidence>
<evidence type="ECO:0000256" key="6">
    <source>
        <dbReference type="SAM" id="MobiDB-lite"/>
    </source>
</evidence>
<evidence type="ECO:0000305" key="7"/>
<evidence type="ECO:0007744" key="8">
    <source>
    </source>
</evidence>
<evidence type="ECO:0007744" key="9">
    <source>
    </source>
</evidence>
<proteinExistence type="evidence at protein level"/>
<dbReference type="EMBL" id="AK146804">
    <property type="protein sequence ID" value="BAE27445.1"/>
    <property type="molecule type" value="mRNA"/>
</dbReference>
<dbReference type="EMBL" id="AK166286">
    <property type="protein sequence ID" value="BAE38683.1"/>
    <property type="molecule type" value="mRNA"/>
</dbReference>
<dbReference type="EMBL" id="AK168118">
    <property type="protein sequence ID" value="BAE40089.1"/>
    <property type="molecule type" value="mRNA"/>
</dbReference>
<dbReference type="EMBL" id="BC031725">
    <property type="protein sequence ID" value="AAH31725.1"/>
    <property type="molecule type" value="mRNA"/>
</dbReference>
<dbReference type="EMBL" id="BC033484">
    <property type="protein sequence ID" value="AAH33484.1"/>
    <property type="molecule type" value="mRNA"/>
</dbReference>
<dbReference type="CCDS" id="CCDS23231.1"/>
<dbReference type="RefSeq" id="NP_001397000.1">
    <property type="nucleotide sequence ID" value="NM_001410071.1"/>
</dbReference>
<dbReference type="RefSeq" id="NP_722494.1">
    <property type="nucleotide sequence ID" value="NM_153799.4"/>
</dbReference>
<dbReference type="RefSeq" id="XP_011241062.1">
    <property type="nucleotide sequence ID" value="XM_011242760.2"/>
</dbReference>
<dbReference type="SMR" id="Q8K2D3"/>
<dbReference type="BioGRID" id="237268">
    <property type="interactions" value="3"/>
</dbReference>
<dbReference type="FunCoup" id="Q8K2D3">
    <property type="interactions" value="2580"/>
</dbReference>
<dbReference type="IntAct" id="Q8K2D3">
    <property type="interactions" value="2"/>
</dbReference>
<dbReference type="MINT" id="Q8K2D3"/>
<dbReference type="STRING" id="10090.ENSMUSP00000049146"/>
<dbReference type="GlyGen" id="Q8K2D3">
    <property type="glycosylation" value="1 site, 1 O-linked glycan (1 site)"/>
</dbReference>
<dbReference type="iPTMnet" id="Q8K2D3"/>
<dbReference type="PhosphoSitePlus" id="Q8K2D3"/>
<dbReference type="jPOST" id="Q8K2D3"/>
<dbReference type="PaxDb" id="10090-ENSMUSP00000049146"/>
<dbReference type="ProteomicsDB" id="277676"/>
<dbReference type="Pumba" id="Q8K2D3"/>
<dbReference type="Antibodypedia" id="27003">
    <property type="antibodies" value="191 antibodies from 29 providers"/>
</dbReference>
<dbReference type="Ensembl" id="ENSMUST00000043990.14">
    <property type="protein sequence ID" value="ENSMUSP00000049146.8"/>
    <property type="gene ID" value="ENSMUSG00000038957.14"/>
</dbReference>
<dbReference type="GeneID" id="353190"/>
<dbReference type="KEGG" id="mmu:353190"/>
<dbReference type="UCSC" id="uc009pvp.1">
    <property type="organism name" value="mouse"/>
</dbReference>
<dbReference type="AGR" id="MGI:2142951"/>
<dbReference type="CTD" id="80153"/>
<dbReference type="MGI" id="MGI:2142951">
    <property type="gene designation" value="Edc3"/>
</dbReference>
<dbReference type="VEuPathDB" id="HostDB:ENSMUSG00000038957"/>
<dbReference type="eggNOG" id="KOG2585">
    <property type="taxonomic scope" value="Eukaryota"/>
</dbReference>
<dbReference type="GeneTree" id="ENSGT00390000016435"/>
<dbReference type="HOGENOM" id="CLU_026194_0_0_1"/>
<dbReference type="InParanoid" id="Q8K2D3"/>
<dbReference type="OMA" id="NHQWPKI"/>
<dbReference type="OrthoDB" id="10030313at2759"/>
<dbReference type="PhylomeDB" id="Q8K2D3"/>
<dbReference type="TreeFam" id="TF324695"/>
<dbReference type="Reactome" id="R-MMU-430039">
    <property type="pathway name" value="mRNA decay by 5' to 3' exoribonuclease"/>
</dbReference>
<dbReference type="BioGRID-ORCS" id="353190">
    <property type="hits" value="4 hits in 77 CRISPR screens"/>
</dbReference>
<dbReference type="ChiTaRS" id="Edc3">
    <property type="organism name" value="mouse"/>
</dbReference>
<dbReference type="PRO" id="PR:Q8K2D3"/>
<dbReference type="Proteomes" id="UP000000589">
    <property type="component" value="Chromosome 9"/>
</dbReference>
<dbReference type="RNAct" id="Q8K2D3">
    <property type="molecule type" value="protein"/>
</dbReference>
<dbReference type="Bgee" id="ENSMUSG00000038957">
    <property type="expression patterns" value="Expressed in embryonic brain and 228 other cell types or tissues"/>
</dbReference>
<dbReference type="ExpressionAtlas" id="Q8K2D3">
    <property type="expression patterns" value="baseline and differential"/>
</dbReference>
<dbReference type="GO" id="GO:0000932">
    <property type="term" value="C:P-body"/>
    <property type="evidence" value="ECO:0007669"/>
    <property type="project" value="UniProtKB-SubCell"/>
</dbReference>
<dbReference type="GO" id="GO:0042802">
    <property type="term" value="F:identical protein binding"/>
    <property type="evidence" value="ECO:0007669"/>
    <property type="project" value="Ensembl"/>
</dbReference>
<dbReference type="GO" id="GO:0003729">
    <property type="term" value="F:mRNA binding"/>
    <property type="evidence" value="ECO:0007669"/>
    <property type="project" value="InterPro"/>
</dbReference>
<dbReference type="GO" id="GO:0031087">
    <property type="term" value="P:deadenylation-independent decapping of nuclear-transcribed mRNA"/>
    <property type="evidence" value="ECO:0007669"/>
    <property type="project" value="InterPro"/>
</dbReference>
<dbReference type="CDD" id="cd01737">
    <property type="entry name" value="LSm16_N"/>
    <property type="match status" value="1"/>
</dbReference>
<dbReference type="FunFam" id="2.30.30.100:FF:000026">
    <property type="entry name" value="Enhancer of mRNA-decapping protein 3"/>
    <property type="match status" value="1"/>
</dbReference>
<dbReference type="FunFam" id="3.40.50.10260:FF:000001">
    <property type="entry name" value="Enhancer of mRNA-decapping protein 3"/>
    <property type="match status" value="1"/>
</dbReference>
<dbReference type="Gene3D" id="2.30.30.100">
    <property type="match status" value="1"/>
</dbReference>
<dbReference type="Gene3D" id="3.40.50.10260">
    <property type="entry name" value="YjeF N-terminal domain"/>
    <property type="match status" value="1"/>
</dbReference>
<dbReference type="InterPro" id="IPR025762">
    <property type="entry name" value="DFDF"/>
</dbReference>
<dbReference type="InterPro" id="IPR019050">
    <property type="entry name" value="FDF_dom"/>
</dbReference>
<dbReference type="InterPro" id="IPR025609">
    <property type="entry name" value="Lsm14-like_N"/>
</dbReference>
<dbReference type="InterPro" id="IPR034107">
    <property type="entry name" value="Lsm16_N"/>
</dbReference>
<dbReference type="InterPro" id="IPR047575">
    <property type="entry name" value="Sm"/>
</dbReference>
<dbReference type="InterPro" id="IPR004443">
    <property type="entry name" value="YjeF_N_dom"/>
</dbReference>
<dbReference type="InterPro" id="IPR036652">
    <property type="entry name" value="YjeF_N_dom_sf"/>
</dbReference>
<dbReference type="PANTHER" id="PTHR13612">
    <property type="entry name" value="ENHANCER OF MRNA-DECAPPING PROTEIN 3"/>
    <property type="match status" value="1"/>
</dbReference>
<dbReference type="PANTHER" id="PTHR13612:SF0">
    <property type="entry name" value="ENHANCER OF MRNA-DECAPPING PROTEIN 3"/>
    <property type="match status" value="1"/>
</dbReference>
<dbReference type="Pfam" id="PF16598">
    <property type="entry name" value="Edc3_linker"/>
    <property type="match status" value="1"/>
</dbReference>
<dbReference type="Pfam" id="PF09532">
    <property type="entry name" value="FDF"/>
    <property type="match status" value="1"/>
</dbReference>
<dbReference type="Pfam" id="PF12701">
    <property type="entry name" value="LSM14"/>
    <property type="match status" value="1"/>
</dbReference>
<dbReference type="Pfam" id="PF03853">
    <property type="entry name" value="YjeF_N"/>
    <property type="match status" value="1"/>
</dbReference>
<dbReference type="SMART" id="SM01199">
    <property type="entry name" value="FDF"/>
    <property type="match status" value="1"/>
</dbReference>
<dbReference type="SMART" id="SM01271">
    <property type="entry name" value="LSM14"/>
    <property type="match status" value="1"/>
</dbReference>
<dbReference type="SUPFAM" id="SSF64153">
    <property type="entry name" value="YjeF N-terminal domain-like"/>
    <property type="match status" value="1"/>
</dbReference>
<dbReference type="PROSITE" id="PS51512">
    <property type="entry name" value="DFDF"/>
    <property type="match status" value="1"/>
</dbReference>
<dbReference type="PROSITE" id="PS52002">
    <property type="entry name" value="SM"/>
    <property type="match status" value="1"/>
</dbReference>
<dbReference type="PROSITE" id="PS51385">
    <property type="entry name" value="YJEF_N"/>
    <property type="match status" value="1"/>
</dbReference>
<keyword id="KW-0963">Cytoplasm</keyword>
<keyword id="KW-0597">Phosphoprotein</keyword>
<keyword id="KW-1185">Reference proteome</keyword>
<keyword id="KW-0694">RNA-binding</keyword>
<organism>
    <name type="scientific">Mus musculus</name>
    <name type="common">Mouse</name>
    <dbReference type="NCBI Taxonomy" id="10090"/>
    <lineage>
        <taxon>Eukaryota</taxon>
        <taxon>Metazoa</taxon>
        <taxon>Chordata</taxon>
        <taxon>Craniata</taxon>
        <taxon>Vertebrata</taxon>
        <taxon>Euteleostomi</taxon>
        <taxon>Mammalia</taxon>
        <taxon>Eutheria</taxon>
        <taxon>Euarchontoglires</taxon>
        <taxon>Glires</taxon>
        <taxon>Rodentia</taxon>
        <taxon>Myomorpha</taxon>
        <taxon>Muroidea</taxon>
        <taxon>Muridae</taxon>
        <taxon>Murinae</taxon>
        <taxon>Mus</taxon>
        <taxon>Mus</taxon>
    </lineage>
</organism>
<name>EDC3_MOUSE</name>
<protein>
    <recommendedName>
        <fullName>Enhancer of mRNA-decapping protein 3</fullName>
    </recommendedName>
    <alternativeName>
        <fullName>YjeF domain-containing protein 1</fullName>
    </alternativeName>
</protein>
<accession>Q8K2D3</accession>
<accession>Q3THV7</accession>
<reference key="1">
    <citation type="journal article" date="2005" name="Science">
        <title>The transcriptional landscape of the mammalian genome.</title>
        <authorList>
            <person name="Carninci P."/>
            <person name="Kasukawa T."/>
            <person name="Katayama S."/>
            <person name="Gough J."/>
            <person name="Frith M.C."/>
            <person name="Maeda N."/>
            <person name="Oyama R."/>
            <person name="Ravasi T."/>
            <person name="Lenhard B."/>
            <person name="Wells C."/>
            <person name="Kodzius R."/>
            <person name="Shimokawa K."/>
            <person name="Bajic V.B."/>
            <person name="Brenner S.E."/>
            <person name="Batalov S."/>
            <person name="Forrest A.R."/>
            <person name="Zavolan M."/>
            <person name="Davis M.J."/>
            <person name="Wilming L.G."/>
            <person name="Aidinis V."/>
            <person name="Allen J.E."/>
            <person name="Ambesi-Impiombato A."/>
            <person name="Apweiler R."/>
            <person name="Aturaliya R.N."/>
            <person name="Bailey T.L."/>
            <person name="Bansal M."/>
            <person name="Baxter L."/>
            <person name="Beisel K.W."/>
            <person name="Bersano T."/>
            <person name="Bono H."/>
            <person name="Chalk A.M."/>
            <person name="Chiu K.P."/>
            <person name="Choudhary V."/>
            <person name="Christoffels A."/>
            <person name="Clutterbuck D.R."/>
            <person name="Crowe M.L."/>
            <person name="Dalla E."/>
            <person name="Dalrymple B.P."/>
            <person name="de Bono B."/>
            <person name="Della Gatta G."/>
            <person name="di Bernardo D."/>
            <person name="Down T."/>
            <person name="Engstrom P."/>
            <person name="Fagiolini M."/>
            <person name="Faulkner G."/>
            <person name="Fletcher C.F."/>
            <person name="Fukushima T."/>
            <person name="Furuno M."/>
            <person name="Futaki S."/>
            <person name="Gariboldi M."/>
            <person name="Georgii-Hemming P."/>
            <person name="Gingeras T.R."/>
            <person name="Gojobori T."/>
            <person name="Green R.E."/>
            <person name="Gustincich S."/>
            <person name="Harbers M."/>
            <person name="Hayashi Y."/>
            <person name="Hensch T.K."/>
            <person name="Hirokawa N."/>
            <person name="Hill D."/>
            <person name="Huminiecki L."/>
            <person name="Iacono M."/>
            <person name="Ikeo K."/>
            <person name="Iwama A."/>
            <person name="Ishikawa T."/>
            <person name="Jakt M."/>
            <person name="Kanapin A."/>
            <person name="Katoh M."/>
            <person name="Kawasawa Y."/>
            <person name="Kelso J."/>
            <person name="Kitamura H."/>
            <person name="Kitano H."/>
            <person name="Kollias G."/>
            <person name="Krishnan S.P."/>
            <person name="Kruger A."/>
            <person name="Kummerfeld S.K."/>
            <person name="Kurochkin I.V."/>
            <person name="Lareau L.F."/>
            <person name="Lazarevic D."/>
            <person name="Lipovich L."/>
            <person name="Liu J."/>
            <person name="Liuni S."/>
            <person name="McWilliam S."/>
            <person name="Madan Babu M."/>
            <person name="Madera M."/>
            <person name="Marchionni L."/>
            <person name="Matsuda H."/>
            <person name="Matsuzawa S."/>
            <person name="Miki H."/>
            <person name="Mignone F."/>
            <person name="Miyake S."/>
            <person name="Morris K."/>
            <person name="Mottagui-Tabar S."/>
            <person name="Mulder N."/>
            <person name="Nakano N."/>
            <person name="Nakauchi H."/>
            <person name="Ng P."/>
            <person name="Nilsson R."/>
            <person name="Nishiguchi S."/>
            <person name="Nishikawa S."/>
            <person name="Nori F."/>
            <person name="Ohara O."/>
            <person name="Okazaki Y."/>
            <person name="Orlando V."/>
            <person name="Pang K.C."/>
            <person name="Pavan W.J."/>
            <person name="Pavesi G."/>
            <person name="Pesole G."/>
            <person name="Petrovsky N."/>
            <person name="Piazza S."/>
            <person name="Reed J."/>
            <person name="Reid J.F."/>
            <person name="Ring B.Z."/>
            <person name="Ringwald M."/>
            <person name="Rost B."/>
            <person name="Ruan Y."/>
            <person name="Salzberg S.L."/>
            <person name="Sandelin A."/>
            <person name="Schneider C."/>
            <person name="Schoenbach C."/>
            <person name="Sekiguchi K."/>
            <person name="Semple C.A."/>
            <person name="Seno S."/>
            <person name="Sessa L."/>
            <person name="Sheng Y."/>
            <person name="Shibata Y."/>
            <person name="Shimada H."/>
            <person name="Shimada K."/>
            <person name="Silva D."/>
            <person name="Sinclair B."/>
            <person name="Sperling S."/>
            <person name="Stupka E."/>
            <person name="Sugiura K."/>
            <person name="Sultana R."/>
            <person name="Takenaka Y."/>
            <person name="Taki K."/>
            <person name="Tammoja K."/>
            <person name="Tan S.L."/>
            <person name="Tang S."/>
            <person name="Taylor M.S."/>
            <person name="Tegner J."/>
            <person name="Teichmann S.A."/>
            <person name="Ueda H.R."/>
            <person name="van Nimwegen E."/>
            <person name="Verardo R."/>
            <person name="Wei C.L."/>
            <person name="Yagi K."/>
            <person name="Yamanishi H."/>
            <person name="Zabarovsky E."/>
            <person name="Zhu S."/>
            <person name="Zimmer A."/>
            <person name="Hide W."/>
            <person name="Bult C."/>
            <person name="Grimmond S.M."/>
            <person name="Teasdale R.D."/>
            <person name="Liu E.T."/>
            <person name="Brusic V."/>
            <person name="Quackenbush J."/>
            <person name="Wahlestedt C."/>
            <person name="Mattick J.S."/>
            <person name="Hume D.A."/>
            <person name="Kai C."/>
            <person name="Sasaki D."/>
            <person name="Tomaru Y."/>
            <person name="Fukuda S."/>
            <person name="Kanamori-Katayama M."/>
            <person name="Suzuki M."/>
            <person name="Aoki J."/>
            <person name="Arakawa T."/>
            <person name="Iida J."/>
            <person name="Imamura K."/>
            <person name="Itoh M."/>
            <person name="Kato T."/>
            <person name="Kawaji H."/>
            <person name="Kawagashira N."/>
            <person name="Kawashima T."/>
            <person name="Kojima M."/>
            <person name="Kondo S."/>
            <person name="Konno H."/>
            <person name="Nakano K."/>
            <person name="Ninomiya N."/>
            <person name="Nishio T."/>
            <person name="Okada M."/>
            <person name="Plessy C."/>
            <person name="Shibata K."/>
            <person name="Shiraki T."/>
            <person name="Suzuki S."/>
            <person name="Tagami M."/>
            <person name="Waki K."/>
            <person name="Watahiki A."/>
            <person name="Okamura-Oho Y."/>
            <person name="Suzuki H."/>
            <person name="Kawai J."/>
            <person name="Hayashizaki Y."/>
        </authorList>
    </citation>
    <scope>NUCLEOTIDE SEQUENCE [LARGE SCALE MRNA]</scope>
    <source>
        <strain>C57BL/6J</strain>
        <strain>DBA/2J</strain>
        <tissue>Mammary gland</tissue>
        <tissue>Stomach</tissue>
    </source>
</reference>
<reference key="2">
    <citation type="journal article" date="2004" name="Genome Res.">
        <title>The status, quality, and expansion of the NIH full-length cDNA project: the Mammalian Gene Collection (MGC).</title>
        <authorList>
            <consortium name="The MGC Project Team"/>
        </authorList>
    </citation>
    <scope>NUCLEOTIDE SEQUENCE [LARGE SCALE MRNA]</scope>
    <source>
        <strain>Czech II</strain>
        <strain>FVB/N</strain>
        <tissue>Mammary tumor</tissue>
    </source>
</reference>
<reference key="3">
    <citation type="journal article" date="2007" name="Proc. Natl. Acad. Sci. U.S.A.">
        <title>Large-scale phosphorylation analysis of mouse liver.</title>
        <authorList>
            <person name="Villen J."/>
            <person name="Beausoleil S.A."/>
            <person name="Gerber S.A."/>
            <person name="Gygi S.P."/>
        </authorList>
    </citation>
    <scope>PHOSPHORYLATION [LARGE SCALE ANALYSIS] AT SER-131</scope>
    <scope>IDENTIFICATION BY MASS SPECTROMETRY [LARGE SCALE ANALYSIS]</scope>
    <source>
        <tissue>Liver</tissue>
    </source>
</reference>
<reference key="4">
    <citation type="journal article" date="2010" name="Cell">
        <title>A tissue-specific atlas of mouse protein phosphorylation and expression.</title>
        <authorList>
            <person name="Huttlin E.L."/>
            <person name="Jedrychowski M.P."/>
            <person name="Elias J.E."/>
            <person name="Goswami T."/>
            <person name="Rad R."/>
            <person name="Beausoleil S.A."/>
            <person name="Villen J."/>
            <person name="Haas W."/>
            <person name="Sowa M.E."/>
            <person name="Gygi S.P."/>
        </authorList>
    </citation>
    <scope>PHOSPHORYLATION [LARGE SCALE ANALYSIS] AT SER-131</scope>
    <scope>IDENTIFICATION BY MASS SPECTROMETRY [LARGE SCALE ANALYSIS]</scope>
    <source>
        <tissue>Pancreas</tissue>
        <tissue>Spleen</tissue>
        <tissue>Testis</tissue>
    </source>
</reference>
<feature type="chain" id="PRO_0000119056" description="Enhancer of mRNA-decapping protein 3">
    <location>
        <begin position="1"/>
        <end position="508"/>
    </location>
</feature>
<feature type="domain" description="Sm" evidence="5">
    <location>
        <begin position="1"/>
        <end position="68"/>
    </location>
</feature>
<feature type="domain" description="DFDF" evidence="4">
    <location>
        <begin position="192"/>
        <end position="228"/>
    </location>
</feature>
<feature type="domain" description="YjeF N-terminal" evidence="3">
    <location>
        <begin position="283"/>
        <end position="487"/>
    </location>
</feature>
<feature type="region of interest" description="Required for P-body targeting and interaction with DCP1A" evidence="1">
    <location>
        <begin position="1"/>
        <end position="79"/>
    </location>
</feature>
<feature type="region of interest" description="Disordered" evidence="6">
    <location>
        <begin position="98"/>
        <end position="194"/>
    </location>
</feature>
<feature type="region of interest" description="Required for interaction with DDX6" evidence="1">
    <location>
        <begin position="191"/>
        <end position="296"/>
    </location>
</feature>
<feature type="modified residue" description="Phosphoserine" evidence="8 9">
    <location>
        <position position="131"/>
    </location>
</feature>
<feature type="modified residue" description="Phosphoserine" evidence="2">
    <location>
        <position position="138"/>
    </location>
</feature>
<feature type="modified residue" description="Phosphoserine" evidence="2">
    <location>
        <position position="140"/>
    </location>
</feature>
<feature type="modified residue" description="Phosphoserine" evidence="2">
    <location>
        <position position="161"/>
    </location>
</feature>
<feature type="sequence conflict" description="In Ref. 1; BAE40089." evidence="7" ref="1">
    <original>P</original>
    <variation>T</variation>
    <location>
        <position position="237"/>
    </location>
</feature>
<feature type="sequence conflict" description="In Ref. 1; BAE40089." evidence="7" ref="1">
    <original>Q</original>
    <variation>R</variation>
    <location>
        <position position="333"/>
    </location>
</feature>
<sequence>MAMDWLGSIVSINCGDSLGVYQGRVSAVDQVSQTISLTRPFHNGVKCLVPEVTFRAGDITELKILEIPGPGDNQQVGDLHQTELGPSGVGYQMSISQNGTGKVVKKPASSSSAPQSIPKRTDVKSQDVAISPQQQQCSKSYVDRHMESLSQSKSFRRRHNSWSSSSRHPNQATPKKSGLKNGQMKNKDDECFGDDIEELPDTDFDFEGNLALFDKAAVFEEIDTYERRSGSRSRGVPNERPARYRHDENILESEPIVYRRITVPHSVSKEFCTDSGLVVPSVSYELHKKLLSVAEKHGLTLERRLEMTGVCASQMALTLLGGPNRLNPKNVHQRPTVALLCGPHVKGAQGISCGRHLANHDVQVILFLPNFVKMLESITNELSLFSKTQGQQVSSLRDLPASPVDLVINCLDCPENAFLRDQPWYKAAVAWANQNRAPVLSIDPPVHEVEQGIDAKWSLALGLPLPLGEHAGRVYLCDIGIPQQVFQEVGINYHSPFGCKFVIPLHSA</sequence>
<gene>
    <name type="primary">Edc3</name>
    <name type="synonym">Yjdc</name>
</gene>